<evidence type="ECO:0000255" key="1">
    <source>
        <dbReference type="HAMAP-Rule" id="MF_00193"/>
    </source>
</evidence>
<accession>B7V1Y3</accession>
<reference key="1">
    <citation type="journal article" date="2009" name="Genome Res.">
        <title>Newly introduced genomic prophage islands are critical determinants of in vivo competitiveness in the Liverpool epidemic strain of Pseudomonas aeruginosa.</title>
        <authorList>
            <person name="Winstanley C."/>
            <person name="Langille M.G.I."/>
            <person name="Fothergill J.L."/>
            <person name="Kukavica-Ibrulj I."/>
            <person name="Paradis-Bleau C."/>
            <person name="Sanschagrin F."/>
            <person name="Thomson N.R."/>
            <person name="Winsor G.L."/>
            <person name="Quail M.A."/>
            <person name="Lennard N."/>
            <person name="Bignell A."/>
            <person name="Clarke L."/>
            <person name="Seeger K."/>
            <person name="Saunders D."/>
            <person name="Harris D."/>
            <person name="Parkhill J."/>
            <person name="Hancock R.E.W."/>
            <person name="Brinkman F.S.L."/>
            <person name="Levesque R.C."/>
        </authorList>
    </citation>
    <scope>NUCLEOTIDE SEQUENCE [LARGE SCALE GENOMIC DNA]</scope>
    <source>
        <strain>LESB58</strain>
    </source>
</reference>
<organism>
    <name type="scientific">Pseudomonas aeruginosa (strain LESB58)</name>
    <dbReference type="NCBI Taxonomy" id="557722"/>
    <lineage>
        <taxon>Bacteria</taxon>
        <taxon>Pseudomonadati</taxon>
        <taxon>Pseudomonadota</taxon>
        <taxon>Gammaproteobacteria</taxon>
        <taxon>Pseudomonadales</taxon>
        <taxon>Pseudomonadaceae</taxon>
        <taxon>Pseudomonas</taxon>
    </lineage>
</organism>
<gene>
    <name evidence="1" type="primary">nadE</name>
    <name type="ordered locus">PLES_53061</name>
</gene>
<feature type="chain" id="PRO_1000118624" description="NH(3)-dependent NAD(+) synthetase">
    <location>
        <begin position="1"/>
        <end position="275"/>
    </location>
</feature>
<feature type="binding site" evidence="1">
    <location>
        <begin position="50"/>
        <end position="57"/>
    </location>
    <ligand>
        <name>ATP</name>
        <dbReference type="ChEBI" id="CHEBI:30616"/>
    </ligand>
</feature>
<feature type="binding site" evidence="1">
    <location>
        <position position="56"/>
    </location>
    <ligand>
        <name>Mg(2+)</name>
        <dbReference type="ChEBI" id="CHEBI:18420"/>
    </ligand>
</feature>
<feature type="binding site" evidence="1">
    <location>
        <position position="147"/>
    </location>
    <ligand>
        <name>deamido-NAD(+)</name>
        <dbReference type="ChEBI" id="CHEBI:58437"/>
    </ligand>
</feature>
<feature type="binding site" evidence="1">
    <location>
        <position position="167"/>
    </location>
    <ligand>
        <name>ATP</name>
        <dbReference type="ChEBI" id="CHEBI:30616"/>
    </ligand>
</feature>
<feature type="binding site" evidence="1">
    <location>
        <position position="172"/>
    </location>
    <ligand>
        <name>Mg(2+)</name>
        <dbReference type="ChEBI" id="CHEBI:18420"/>
    </ligand>
</feature>
<feature type="binding site" evidence="1">
    <location>
        <position position="180"/>
    </location>
    <ligand>
        <name>deamido-NAD(+)</name>
        <dbReference type="ChEBI" id="CHEBI:58437"/>
    </ligand>
</feature>
<feature type="binding site" evidence="1">
    <location>
        <position position="187"/>
    </location>
    <ligand>
        <name>deamido-NAD(+)</name>
        <dbReference type="ChEBI" id="CHEBI:58437"/>
    </ligand>
</feature>
<feature type="binding site" evidence="1">
    <location>
        <position position="196"/>
    </location>
    <ligand>
        <name>ATP</name>
        <dbReference type="ChEBI" id="CHEBI:30616"/>
    </ligand>
</feature>
<feature type="binding site" evidence="1">
    <location>
        <position position="218"/>
    </location>
    <ligand>
        <name>ATP</name>
        <dbReference type="ChEBI" id="CHEBI:30616"/>
    </ligand>
</feature>
<feature type="binding site" evidence="1">
    <location>
        <begin position="267"/>
        <end position="268"/>
    </location>
    <ligand>
        <name>deamido-NAD(+)</name>
        <dbReference type="ChEBI" id="CHEBI:58437"/>
    </ligand>
</feature>
<sequence length="275" mass="29697">MQQIQRDIAQALQVQPPFQSEADVQAQIARRIAFIQQCLKDSGLKTLVLGISGGVDSLTAGLLAQRAVEQLREQTGDQAYRFIAVRLPYQVQQDEADAQASLATIRADEEQTVNIGPSVKALAEQLEALEGLEPAKSDFVIGNIKARIRMVAQYAIAGARGGLVIGTDHAAEAVMGFFTKFGDGACDLAPLSGLAKHQVRALARALGAPENLVEKIPTADLEDLRPGHPDEASHGVTYAEIDAFLHGQPLREEAARVIVDTYHKTQHKRELPKAP</sequence>
<name>NADE_PSEA8</name>
<comment type="function">
    <text evidence="1">Catalyzes the ATP-dependent amidation of deamido-NAD to form NAD. Uses ammonia as a nitrogen source.</text>
</comment>
<comment type="catalytic activity">
    <reaction evidence="1">
        <text>deamido-NAD(+) + NH4(+) + ATP = AMP + diphosphate + NAD(+) + H(+)</text>
        <dbReference type="Rhea" id="RHEA:21188"/>
        <dbReference type="ChEBI" id="CHEBI:15378"/>
        <dbReference type="ChEBI" id="CHEBI:28938"/>
        <dbReference type="ChEBI" id="CHEBI:30616"/>
        <dbReference type="ChEBI" id="CHEBI:33019"/>
        <dbReference type="ChEBI" id="CHEBI:57540"/>
        <dbReference type="ChEBI" id="CHEBI:58437"/>
        <dbReference type="ChEBI" id="CHEBI:456215"/>
        <dbReference type="EC" id="6.3.1.5"/>
    </reaction>
</comment>
<comment type="pathway">
    <text evidence="1">Cofactor biosynthesis; NAD(+) biosynthesis; NAD(+) from deamido-NAD(+) (ammonia route): step 1/1.</text>
</comment>
<comment type="subunit">
    <text evidence="1">Homodimer.</text>
</comment>
<comment type="similarity">
    <text evidence="1">Belongs to the NAD synthetase family.</text>
</comment>
<dbReference type="EC" id="6.3.1.5" evidence="1"/>
<dbReference type="EMBL" id="FM209186">
    <property type="protein sequence ID" value="CAW30060.1"/>
    <property type="molecule type" value="Genomic_DNA"/>
</dbReference>
<dbReference type="RefSeq" id="WP_003099998.1">
    <property type="nucleotide sequence ID" value="NC_011770.1"/>
</dbReference>
<dbReference type="SMR" id="B7V1Y3"/>
<dbReference type="KEGG" id="pag:PLES_53061"/>
<dbReference type="HOGENOM" id="CLU_059327_3_0_6"/>
<dbReference type="UniPathway" id="UPA00253">
    <property type="reaction ID" value="UER00333"/>
</dbReference>
<dbReference type="GO" id="GO:0005737">
    <property type="term" value="C:cytoplasm"/>
    <property type="evidence" value="ECO:0007669"/>
    <property type="project" value="InterPro"/>
</dbReference>
<dbReference type="GO" id="GO:0005524">
    <property type="term" value="F:ATP binding"/>
    <property type="evidence" value="ECO:0007669"/>
    <property type="project" value="UniProtKB-UniRule"/>
</dbReference>
<dbReference type="GO" id="GO:0004359">
    <property type="term" value="F:glutaminase activity"/>
    <property type="evidence" value="ECO:0007669"/>
    <property type="project" value="InterPro"/>
</dbReference>
<dbReference type="GO" id="GO:0046872">
    <property type="term" value="F:metal ion binding"/>
    <property type="evidence" value="ECO:0007669"/>
    <property type="project" value="UniProtKB-KW"/>
</dbReference>
<dbReference type="GO" id="GO:0003952">
    <property type="term" value="F:NAD+ synthase (glutamine-hydrolyzing) activity"/>
    <property type="evidence" value="ECO:0007669"/>
    <property type="project" value="InterPro"/>
</dbReference>
<dbReference type="GO" id="GO:0008795">
    <property type="term" value="F:NAD+ synthase activity"/>
    <property type="evidence" value="ECO:0007669"/>
    <property type="project" value="UniProtKB-UniRule"/>
</dbReference>
<dbReference type="GO" id="GO:0009435">
    <property type="term" value="P:NAD biosynthetic process"/>
    <property type="evidence" value="ECO:0007669"/>
    <property type="project" value="UniProtKB-UniRule"/>
</dbReference>
<dbReference type="CDD" id="cd00553">
    <property type="entry name" value="NAD_synthase"/>
    <property type="match status" value="1"/>
</dbReference>
<dbReference type="FunFam" id="3.40.50.620:FF:000253">
    <property type="entry name" value="NH(3)-dependent NAD(+) synthetase"/>
    <property type="match status" value="1"/>
</dbReference>
<dbReference type="Gene3D" id="3.40.50.620">
    <property type="entry name" value="HUPs"/>
    <property type="match status" value="1"/>
</dbReference>
<dbReference type="HAMAP" id="MF_00193">
    <property type="entry name" value="NadE_ammonia_dep"/>
    <property type="match status" value="1"/>
</dbReference>
<dbReference type="InterPro" id="IPR022310">
    <property type="entry name" value="NAD/GMP_synthase"/>
</dbReference>
<dbReference type="InterPro" id="IPR003694">
    <property type="entry name" value="NAD_synthase"/>
</dbReference>
<dbReference type="InterPro" id="IPR022926">
    <property type="entry name" value="NH(3)-dep_NAD(+)_synth"/>
</dbReference>
<dbReference type="InterPro" id="IPR014729">
    <property type="entry name" value="Rossmann-like_a/b/a_fold"/>
</dbReference>
<dbReference type="NCBIfam" id="TIGR00552">
    <property type="entry name" value="nadE"/>
    <property type="match status" value="1"/>
</dbReference>
<dbReference type="NCBIfam" id="NF001979">
    <property type="entry name" value="PRK00768.1"/>
    <property type="match status" value="1"/>
</dbReference>
<dbReference type="PANTHER" id="PTHR23090">
    <property type="entry name" value="NH 3 /GLUTAMINE-DEPENDENT NAD + SYNTHETASE"/>
    <property type="match status" value="1"/>
</dbReference>
<dbReference type="PANTHER" id="PTHR23090:SF7">
    <property type="entry name" value="NH(3)-DEPENDENT NAD(+) SYNTHETASE"/>
    <property type="match status" value="1"/>
</dbReference>
<dbReference type="Pfam" id="PF02540">
    <property type="entry name" value="NAD_synthase"/>
    <property type="match status" value="1"/>
</dbReference>
<dbReference type="SUPFAM" id="SSF52402">
    <property type="entry name" value="Adenine nucleotide alpha hydrolases-like"/>
    <property type="match status" value="1"/>
</dbReference>
<proteinExistence type="inferred from homology"/>
<keyword id="KW-0067">ATP-binding</keyword>
<keyword id="KW-0436">Ligase</keyword>
<keyword id="KW-0460">Magnesium</keyword>
<keyword id="KW-0479">Metal-binding</keyword>
<keyword id="KW-0520">NAD</keyword>
<keyword id="KW-0547">Nucleotide-binding</keyword>
<protein>
    <recommendedName>
        <fullName evidence="1">NH(3)-dependent NAD(+) synthetase</fullName>
        <ecNumber evidence="1">6.3.1.5</ecNumber>
    </recommendedName>
</protein>